<gene>
    <name evidence="1" type="primary">rplI</name>
    <name type="ordered locus">Bpet3054</name>
</gene>
<keyword id="KW-0687">Ribonucleoprotein</keyword>
<keyword id="KW-0689">Ribosomal protein</keyword>
<keyword id="KW-0694">RNA-binding</keyword>
<keyword id="KW-0699">rRNA-binding</keyword>
<protein>
    <recommendedName>
        <fullName evidence="1">Large ribosomal subunit protein bL9</fullName>
    </recommendedName>
    <alternativeName>
        <fullName evidence="2">50S ribosomal protein L9</fullName>
    </alternativeName>
</protein>
<comment type="function">
    <text evidence="1">Binds to the 23S rRNA.</text>
</comment>
<comment type="similarity">
    <text evidence="1">Belongs to the bacterial ribosomal protein bL9 family.</text>
</comment>
<sequence length="151" mass="16216">MQVILLEKVVNLGNLGEIVRVRDGYARNFLIPQKKARRATDAALKEFEARRAELEKIQAEKLAAAEALGGRLAGYQLKIVQKAGVDGRLFGSVTNADVAEGLKKAGFEAVEKAQVRLPNGPLKAVGEYPIQVALHADVTVDVTVVVEGDIA</sequence>
<reference key="1">
    <citation type="journal article" date="2008" name="BMC Genomics">
        <title>The missing link: Bordetella petrii is endowed with both the metabolic versatility of environmental bacteria and virulence traits of pathogenic Bordetellae.</title>
        <authorList>
            <person name="Gross R."/>
            <person name="Guzman C.A."/>
            <person name="Sebaihia M."/>
            <person name="Martin dos Santos V.A.P."/>
            <person name="Pieper D.H."/>
            <person name="Koebnik R."/>
            <person name="Lechner M."/>
            <person name="Bartels D."/>
            <person name="Buhrmester J."/>
            <person name="Choudhuri J.V."/>
            <person name="Ebensen T."/>
            <person name="Gaigalat L."/>
            <person name="Herrmann S."/>
            <person name="Khachane A.N."/>
            <person name="Larisch C."/>
            <person name="Link S."/>
            <person name="Linke B."/>
            <person name="Meyer F."/>
            <person name="Mormann S."/>
            <person name="Nakunst D."/>
            <person name="Rueckert C."/>
            <person name="Schneiker-Bekel S."/>
            <person name="Schulze K."/>
            <person name="Voerholter F.-J."/>
            <person name="Yevsa T."/>
            <person name="Engle J.T."/>
            <person name="Goldman W.E."/>
            <person name="Puehler A."/>
            <person name="Goebel U.B."/>
            <person name="Goesmann A."/>
            <person name="Bloecker H."/>
            <person name="Kaiser O."/>
            <person name="Martinez-Arias R."/>
        </authorList>
    </citation>
    <scope>NUCLEOTIDE SEQUENCE [LARGE SCALE GENOMIC DNA]</scope>
    <source>
        <strain>ATCC BAA-461 / DSM 12804 / CCUG 43448</strain>
    </source>
</reference>
<organism>
    <name type="scientific">Bordetella petrii (strain ATCC BAA-461 / DSM 12804 / CCUG 43448)</name>
    <dbReference type="NCBI Taxonomy" id="340100"/>
    <lineage>
        <taxon>Bacteria</taxon>
        <taxon>Pseudomonadati</taxon>
        <taxon>Pseudomonadota</taxon>
        <taxon>Betaproteobacteria</taxon>
        <taxon>Burkholderiales</taxon>
        <taxon>Alcaligenaceae</taxon>
        <taxon>Bordetella</taxon>
    </lineage>
</organism>
<evidence type="ECO:0000255" key="1">
    <source>
        <dbReference type="HAMAP-Rule" id="MF_00503"/>
    </source>
</evidence>
<evidence type="ECO:0000305" key="2"/>
<dbReference type="EMBL" id="AM902716">
    <property type="protein sequence ID" value="CAP43396.1"/>
    <property type="molecule type" value="Genomic_DNA"/>
</dbReference>
<dbReference type="SMR" id="A9IT92"/>
<dbReference type="STRING" id="94624.Bpet3054"/>
<dbReference type="KEGG" id="bpt:Bpet3054"/>
<dbReference type="eggNOG" id="COG0359">
    <property type="taxonomic scope" value="Bacteria"/>
</dbReference>
<dbReference type="Proteomes" id="UP000001225">
    <property type="component" value="Chromosome"/>
</dbReference>
<dbReference type="GO" id="GO:1990904">
    <property type="term" value="C:ribonucleoprotein complex"/>
    <property type="evidence" value="ECO:0007669"/>
    <property type="project" value="UniProtKB-KW"/>
</dbReference>
<dbReference type="GO" id="GO:0005840">
    <property type="term" value="C:ribosome"/>
    <property type="evidence" value="ECO:0007669"/>
    <property type="project" value="UniProtKB-KW"/>
</dbReference>
<dbReference type="GO" id="GO:0019843">
    <property type="term" value="F:rRNA binding"/>
    <property type="evidence" value="ECO:0007669"/>
    <property type="project" value="UniProtKB-UniRule"/>
</dbReference>
<dbReference type="GO" id="GO:0003735">
    <property type="term" value="F:structural constituent of ribosome"/>
    <property type="evidence" value="ECO:0007669"/>
    <property type="project" value="InterPro"/>
</dbReference>
<dbReference type="GO" id="GO:0006412">
    <property type="term" value="P:translation"/>
    <property type="evidence" value="ECO:0007669"/>
    <property type="project" value="UniProtKB-UniRule"/>
</dbReference>
<dbReference type="Gene3D" id="3.10.430.100">
    <property type="entry name" value="Ribosomal protein L9, C-terminal domain"/>
    <property type="match status" value="1"/>
</dbReference>
<dbReference type="Gene3D" id="3.40.5.10">
    <property type="entry name" value="Ribosomal protein L9, N-terminal domain"/>
    <property type="match status" value="1"/>
</dbReference>
<dbReference type="HAMAP" id="MF_00503">
    <property type="entry name" value="Ribosomal_bL9"/>
    <property type="match status" value="1"/>
</dbReference>
<dbReference type="InterPro" id="IPR000244">
    <property type="entry name" value="Ribosomal_bL9"/>
</dbReference>
<dbReference type="InterPro" id="IPR009027">
    <property type="entry name" value="Ribosomal_bL9/RNase_H1_N"/>
</dbReference>
<dbReference type="InterPro" id="IPR020594">
    <property type="entry name" value="Ribosomal_bL9_bac/chp"/>
</dbReference>
<dbReference type="InterPro" id="IPR020069">
    <property type="entry name" value="Ribosomal_bL9_C"/>
</dbReference>
<dbReference type="InterPro" id="IPR036791">
    <property type="entry name" value="Ribosomal_bL9_C_sf"/>
</dbReference>
<dbReference type="InterPro" id="IPR020070">
    <property type="entry name" value="Ribosomal_bL9_N"/>
</dbReference>
<dbReference type="InterPro" id="IPR036935">
    <property type="entry name" value="Ribosomal_bL9_N_sf"/>
</dbReference>
<dbReference type="NCBIfam" id="TIGR00158">
    <property type="entry name" value="L9"/>
    <property type="match status" value="1"/>
</dbReference>
<dbReference type="PANTHER" id="PTHR21368">
    <property type="entry name" value="50S RIBOSOMAL PROTEIN L9"/>
    <property type="match status" value="1"/>
</dbReference>
<dbReference type="Pfam" id="PF03948">
    <property type="entry name" value="Ribosomal_L9_C"/>
    <property type="match status" value="1"/>
</dbReference>
<dbReference type="Pfam" id="PF01281">
    <property type="entry name" value="Ribosomal_L9_N"/>
    <property type="match status" value="1"/>
</dbReference>
<dbReference type="SUPFAM" id="SSF55658">
    <property type="entry name" value="L9 N-domain-like"/>
    <property type="match status" value="1"/>
</dbReference>
<dbReference type="SUPFAM" id="SSF55653">
    <property type="entry name" value="Ribosomal protein L9 C-domain"/>
    <property type="match status" value="1"/>
</dbReference>
<dbReference type="PROSITE" id="PS00651">
    <property type="entry name" value="RIBOSOMAL_L9"/>
    <property type="match status" value="1"/>
</dbReference>
<name>RL9_BORPD</name>
<feature type="chain" id="PRO_1000126874" description="Large ribosomal subunit protein bL9">
    <location>
        <begin position="1"/>
        <end position="151"/>
    </location>
</feature>
<accession>A9IT92</accession>
<proteinExistence type="inferred from homology"/>